<comment type="function">
    <text evidence="3 4">RNA polymerase II subunit B1 C-terminal domain (CTD) phosphatase that dephosphorylates 'Ser-5' of the CTD and regulates RNA polymerase II during the transition from 'Ser-5' to 'Ser-2' phosphorylation.</text>
</comment>
<comment type="catalytic activity">
    <reaction>
        <text>O-phospho-L-seryl-[protein] + H2O = L-seryl-[protein] + phosphate</text>
        <dbReference type="Rhea" id="RHEA:20629"/>
        <dbReference type="Rhea" id="RHEA-COMP:9863"/>
        <dbReference type="Rhea" id="RHEA-COMP:11604"/>
        <dbReference type="ChEBI" id="CHEBI:15377"/>
        <dbReference type="ChEBI" id="CHEBI:29999"/>
        <dbReference type="ChEBI" id="CHEBI:43474"/>
        <dbReference type="ChEBI" id="CHEBI:83421"/>
        <dbReference type="EC" id="3.1.3.16"/>
    </reaction>
</comment>
<comment type="catalytic activity">
    <reaction>
        <text>O-phospho-L-threonyl-[protein] + H2O = L-threonyl-[protein] + phosphate</text>
        <dbReference type="Rhea" id="RHEA:47004"/>
        <dbReference type="Rhea" id="RHEA-COMP:11060"/>
        <dbReference type="Rhea" id="RHEA-COMP:11605"/>
        <dbReference type="ChEBI" id="CHEBI:15377"/>
        <dbReference type="ChEBI" id="CHEBI:30013"/>
        <dbReference type="ChEBI" id="CHEBI:43474"/>
        <dbReference type="ChEBI" id="CHEBI:61977"/>
        <dbReference type="EC" id="3.1.3.16"/>
    </reaction>
</comment>
<comment type="subunit">
    <text evidence="3">Interacts with RPO21.</text>
</comment>
<comment type="subcellular location">
    <subcellularLocation>
        <location>Cytoplasm</location>
    </subcellularLocation>
    <subcellularLocation>
        <location>Nucleus</location>
    </subcellularLocation>
    <text>Shuttles constitutively between the cytoplasm and the nucleus.</text>
</comment>
<comment type="miscellaneous">
    <text evidence="2">Present with 5480 molecules/cell in log phase SD medium.</text>
</comment>
<comment type="similarity">
    <text evidence="1 5">Belongs to the RPAP2 family.</text>
</comment>
<feature type="chain" id="PRO_0000202653" description="RNA polymerase II subunit B1 CTD phosphatase RTR1">
    <location>
        <begin position="1"/>
        <end position="226"/>
    </location>
</feature>
<feature type="zinc finger region" description="RTR1-type" evidence="1">
    <location>
        <begin position="50"/>
        <end position="136"/>
    </location>
</feature>
<feature type="binding site" evidence="1">
    <location>
        <position position="73"/>
    </location>
    <ligand>
        <name>Zn(2+)</name>
        <dbReference type="ChEBI" id="CHEBI:29105"/>
    </ligand>
</feature>
<feature type="binding site" evidence="1">
    <location>
        <position position="78"/>
    </location>
    <ligand>
        <name>Zn(2+)</name>
        <dbReference type="ChEBI" id="CHEBI:29105"/>
    </ligand>
</feature>
<feature type="binding site" evidence="1">
    <location>
        <position position="112"/>
    </location>
    <ligand>
        <name>Zn(2+)</name>
        <dbReference type="ChEBI" id="CHEBI:29105"/>
    </ligand>
</feature>
<feature type="binding site" evidence="1">
    <location>
        <position position="116"/>
    </location>
    <ligand>
        <name>Zn(2+)</name>
        <dbReference type="ChEBI" id="CHEBI:29105"/>
    </ligand>
</feature>
<feature type="mutagenesis site" description="Loss of function." evidence="3">
    <original>C</original>
    <variation>S</variation>
    <location>
        <position position="73"/>
    </location>
</feature>
<feature type="mutagenesis site" description="Loss of function; when associated with S-116." evidence="3">
    <original>C</original>
    <variation>S</variation>
    <location>
        <position position="112"/>
    </location>
</feature>
<feature type="mutagenesis site" description="Loss of function; when associated with S-112." evidence="3">
    <original>H</original>
    <variation>S</variation>
    <location>
        <position position="116"/>
    </location>
</feature>
<feature type="helix" evidence="6">
    <location>
        <begin position="4"/>
        <end position="11"/>
    </location>
</feature>
<feature type="helix" evidence="6">
    <location>
        <begin position="13"/>
        <end position="15"/>
    </location>
</feature>
<feature type="helix" evidence="6">
    <location>
        <begin position="23"/>
        <end position="37"/>
    </location>
</feature>
<feature type="strand" evidence="6">
    <location>
        <begin position="38"/>
        <end position="40"/>
    </location>
</feature>
<feature type="strand" evidence="6">
    <location>
        <begin position="42"/>
        <end position="44"/>
    </location>
</feature>
<feature type="helix" evidence="6">
    <location>
        <begin position="45"/>
        <end position="51"/>
    </location>
</feature>
<feature type="helix" evidence="6">
    <location>
        <begin position="52"/>
        <end position="54"/>
    </location>
</feature>
<feature type="helix" evidence="6">
    <location>
        <begin position="57"/>
        <end position="69"/>
    </location>
</feature>
<feature type="helix" evidence="6">
    <location>
        <begin position="91"/>
        <end position="99"/>
    </location>
</feature>
<feature type="strand" evidence="6">
    <location>
        <begin position="100"/>
        <end position="102"/>
    </location>
</feature>
<feature type="helix" evidence="6">
    <location>
        <begin position="105"/>
        <end position="108"/>
    </location>
</feature>
<feature type="strand" evidence="6">
    <location>
        <begin position="111"/>
        <end position="113"/>
    </location>
</feature>
<feature type="helix" evidence="6">
    <location>
        <begin position="114"/>
        <end position="124"/>
    </location>
</feature>
<feature type="helix" evidence="6">
    <location>
        <begin position="132"/>
        <end position="134"/>
    </location>
</feature>
<feature type="turn" evidence="6">
    <location>
        <begin position="136"/>
        <end position="139"/>
    </location>
</feature>
<feature type="helix" evidence="6">
    <location>
        <begin position="146"/>
        <end position="152"/>
    </location>
</feature>
<feature type="helix" evidence="6">
    <location>
        <begin position="158"/>
        <end position="165"/>
    </location>
</feature>
<feature type="helix" evidence="6">
    <location>
        <begin position="168"/>
        <end position="175"/>
    </location>
</feature>
<dbReference type="EC" id="3.1.3.16"/>
<dbReference type="EMBL" id="U18917">
    <property type="protein sequence ID" value="AAB64666.1"/>
    <property type="molecule type" value="Genomic_DNA"/>
</dbReference>
<dbReference type="EMBL" id="BK006939">
    <property type="protein sequence ID" value="DAA07800.1"/>
    <property type="molecule type" value="Genomic_DNA"/>
</dbReference>
<dbReference type="PIR" id="S50642">
    <property type="entry name" value="S50642"/>
</dbReference>
<dbReference type="RefSeq" id="NP_011066.3">
    <property type="nucleotide sequence ID" value="NM_001179029.3"/>
</dbReference>
<dbReference type="PDB" id="5C2Y">
    <property type="method" value="X-ray"/>
    <property type="resolution" value="2.60 A"/>
    <property type="chains" value="A/B=1-178"/>
</dbReference>
<dbReference type="PDBsum" id="5C2Y"/>
<dbReference type="SMR" id="P40084"/>
<dbReference type="BioGRID" id="36888">
    <property type="interactions" value="251"/>
</dbReference>
<dbReference type="DIP" id="DIP-6690N"/>
<dbReference type="FunCoup" id="P40084">
    <property type="interactions" value="426"/>
</dbReference>
<dbReference type="IntAct" id="P40084">
    <property type="interactions" value="22"/>
</dbReference>
<dbReference type="MINT" id="P40084"/>
<dbReference type="STRING" id="4932.YER139C"/>
<dbReference type="iPTMnet" id="P40084"/>
<dbReference type="PaxDb" id="4932-YER139C"/>
<dbReference type="PeptideAtlas" id="P40084"/>
<dbReference type="EnsemblFungi" id="YER139C_mRNA">
    <property type="protein sequence ID" value="YER139C"/>
    <property type="gene ID" value="YER139C"/>
</dbReference>
<dbReference type="GeneID" id="856882"/>
<dbReference type="KEGG" id="sce:YER139C"/>
<dbReference type="AGR" id="SGD:S000000941"/>
<dbReference type="SGD" id="S000000941">
    <property type="gene designation" value="RTR1"/>
</dbReference>
<dbReference type="VEuPathDB" id="FungiDB:YER139C"/>
<dbReference type="eggNOG" id="KOG4780">
    <property type="taxonomic scope" value="Eukaryota"/>
</dbReference>
<dbReference type="HOGENOM" id="CLU_086709_0_0_1"/>
<dbReference type="InParanoid" id="P40084"/>
<dbReference type="OMA" id="CCKEHYQ"/>
<dbReference type="OrthoDB" id="2590500at2759"/>
<dbReference type="BioCyc" id="YEAST:G3O-30300-MONOMER"/>
<dbReference type="Reactome" id="R-SCE-6807505">
    <property type="pathway name" value="RNA polymerase II transcribes snRNA genes"/>
</dbReference>
<dbReference type="BioGRID-ORCS" id="856882">
    <property type="hits" value="1 hit in 10 CRISPR screens"/>
</dbReference>
<dbReference type="EvolutionaryTrace" id="P40084"/>
<dbReference type="PRO" id="PR:P40084"/>
<dbReference type="Proteomes" id="UP000002311">
    <property type="component" value="Chromosome V"/>
</dbReference>
<dbReference type="RNAct" id="P40084">
    <property type="molecule type" value="protein"/>
</dbReference>
<dbReference type="GO" id="GO:0005737">
    <property type="term" value="C:cytoplasm"/>
    <property type="evidence" value="ECO:0000314"/>
    <property type="project" value="SGD"/>
</dbReference>
<dbReference type="GO" id="GO:0005634">
    <property type="term" value="C:nucleus"/>
    <property type="evidence" value="ECO:0000314"/>
    <property type="project" value="SGD"/>
</dbReference>
<dbReference type="GO" id="GO:0043175">
    <property type="term" value="F:RNA polymerase core enzyme binding"/>
    <property type="evidence" value="ECO:0007669"/>
    <property type="project" value="InterPro"/>
</dbReference>
<dbReference type="GO" id="GO:0008420">
    <property type="term" value="F:RNA polymerase II CTD heptapeptide repeat phosphatase activity"/>
    <property type="evidence" value="ECO:0000314"/>
    <property type="project" value="SGD"/>
</dbReference>
<dbReference type="GO" id="GO:0008270">
    <property type="term" value="F:zinc ion binding"/>
    <property type="evidence" value="ECO:0007669"/>
    <property type="project" value="UniProtKB-KW"/>
</dbReference>
<dbReference type="GO" id="GO:0006366">
    <property type="term" value="P:transcription by RNA polymerase II"/>
    <property type="evidence" value="ECO:0000315"/>
    <property type="project" value="SGD"/>
</dbReference>
<dbReference type="FunFam" id="1.25.40.820:FF:000002">
    <property type="entry name" value="RTR1p CTD phosphatase"/>
    <property type="match status" value="1"/>
</dbReference>
<dbReference type="Gene3D" id="1.25.40.820">
    <property type="match status" value="1"/>
</dbReference>
<dbReference type="InterPro" id="IPR039693">
    <property type="entry name" value="Rtr1/RPAP2"/>
</dbReference>
<dbReference type="InterPro" id="IPR007308">
    <property type="entry name" value="Rtr1/RPAP2_dom"/>
</dbReference>
<dbReference type="InterPro" id="IPR038534">
    <property type="entry name" value="Rtr1/RPAP2_sf"/>
</dbReference>
<dbReference type="PANTHER" id="PTHR14732">
    <property type="entry name" value="RNA POLYMERASE II SUBUNIT B1 CTD PHOSPHATASE RPAP2-RELATED"/>
    <property type="match status" value="1"/>
</dbReference>
<dbReference type="PANTHER" id="PTHR14732:SF0">
    <property type="entry name" value="RNA POLYMERASE II SUBUNIT B1 CTD PHOSPHATASE RPAP2-RELATED"/>
    <property type="match status" value="1"/>
</dbReference>
<dbReference type="Pfam" id="PF04181">
    <property type="entry name" value="RPAP2_Rtr1"/>
    <property type="match status" value="1"/>
</dbReference>
<dbReference type="PROSITE" id="PS51479">
    <property type="entry name" value="ZF_RTR1"/>
    <property type="match status" value="1"/>
</dbReference>
<evidence type="ECO:0000255" key="1">
    <source>
        <dbReference type="PROSITE-ProRule" id="PRU00812"/>
    </source>
</evidence>
<evidence type="ECO:0000269" key="2">
    <source>
    </source>
</evidence>
<evidence type="ECO:0000269" key="3">
    <source>
    </source>
</evidence>
<evidence type="ECO:0000269" key="4">
    <source>
    </source>
</evidence>
<evidence type="ECO:0000305" key="5"/>
<evidence type="ECO:0007829" key="6">
    <source>
        <dbReference type="PDB" id="5C2Y"/>
    </source>
</evidence>
<sequence length="226" mass="26240">MATIEDIKETALIPFQKHRQLSMHEAEVITLEIIGLLCDSECKDEKTLKYLGRFLTPDMYQDLVDERNLNKRCGYPLCGKSPERIRDPFSMNDTTKKFLLENNPYAYLSHYCSKFHFRCSQFYQVQLSDEALFARTGVHLFEDPEQDKHDIDFKVTLFEELLREKASEEDIKSLISGLKKLGLNPDSGTTEKDDTELEDDLSKWLAQIKIVENDNPSILGDFTRED</sequence>
<accession>P40084</accession>
<accession>D3DM46</accession>
<protein>
    <recommendedName>
        <fullName>RNA polymerase II subunit B1 CTD phosphatase RTR1</fullName>
        <ecNumber>3.1.3.16</ecNumber>
    </recommendedName>
    <alternativeName>
        <fullName>RNA polymerase II-associated protein 2 homolog RTR1</fullName>
    </alternativeName>
    <alternativeName>
        <fullName>Regulator of transcription 1</fullName>
    </alternativeName>
</protein>
<reference key="1">
    <citation type="journal article" date="1997" name="Nature">
        <title>The nucleotide sequence of Saccharomyces cerevisiae chromosome V.</title>
        <authorList>
            <person name="Dietrich F.S."/>
            <person name="Mulligan J.T."/>
            <person name="Hennessy K.M."/>
            <person name="Yelton M.A."/>
            <person name="Allen E."/>
            <person name="Araujo R."/>
            <person name="Aviles E."/>
            <person name="Berno A."/>
            <person name="Brennan T."/>
            <person name="Carpenter J."/>
            <person name="Chen E."/>
            <person name="Cherry J.M."/>
            <person name="Chung E."/>
            <person name="Duncan M."/>
            <person name="Guzman E."/>
            <person name="Hartzell G."/>
            <person name="Hunicke-Smith S."/>
            <person name="Hyman R.W."/>
            <person name="Kayser A."/>
            <person name="Komp C."/>
            <person name="Lashkari D."/>
            <person name="Lew H."/>
            <person name="Lin D."/>
            <person name="Mosedale D."/>
            <person name="Nakahara K."/>
            <person name="Namath A."/>
            <person name="Norgren R."/>
            <person name="Oefner P."/>
            <person name="Oh C."/>
            <person name="Petel F.X."/>
            <person name="Roberts D."/>
            <person name="Sehl P."/>
            <person name="Schramm S."/>
            <person name="Shogren T."/>
            <person name="Smith V."/>
            <person name="Taylor P."/>
            <person name="Wei Y."/>
            <person name="Botstein D."/>
            <person name="Davis R.W."/>
        </authorList>
    </citation>
    <scope>NUCLEOTIDE SEQUENCE [LARGE SCALE GENOMIC DNA]</scope>
    <source>
        <strain>ATCC 204508 / S288c</strain>
    </source>
</reference>
<reference key="2">
    <citation type="journal article" date="2014" name="G3 (Bethesda)">
        <title>The reference genome sequence of Saccharomyces cerevisiae: Then and now.</title>
        <authorList>
            <person name="Engel S.R."/>
            <person name="Dietrich F.S."/>
            <person name="Fisk D.G."/>
            <person name="Binkley G."/>
            <person name="Balakrishnan R."/>
            <person name="Costanzo M.C."/>
            <person name="Dwight S.S."/>
            <person name="Hitz B.C."/>
            <person name="Karra K."/>
            <person name="Nash R.S."/>
            <person name="Weng S."/>
            <person name="Wong E.D."/>
            <person name="Lloyd P."/>
            <person name="Skrzypek M.S."/>
            <person name="Miyasato S.R."/>
            <person name="Simison M."/>
            <person name="Cherry J.M."/>
        </authorList>
    </citation>
    <scope>GENOME REANNOTATION</scope>
    <source>
        <strain>ATCC 204508 / S288c</strain>
    </source>
</reference>
<reference key="3">
    <citation type="journal article" date="2003" name="Nature">
        <title>Global analysis of protein localization in budding yeast.</title>
        <authorList>
            <person name="Huh W.-K."/>
            <person name="Falvo J.V."/>
            <person name="Gerke L.C."/>
            <person name="Carroll A.S."/>
            <person name="Howson R.W."/>
            <person name="Weissman J.S."/>
            <person name="O'Shea E.K."/>
        </authorList>
    </citation>
    <scope>SUBCELLULAR LOCATION [LARGE SCALE ANALYSIS]</scope>
</reference>
<reference key="4">
    <citation type="journal article" date="2003" name="Nature">
        <title>Global analysis of protein expression in yeast.</title>
        <authorList>
            <person name="Ghaemmaghami S."/>
            <person name="Huh W.-K."/>
            <person name="Bower K."/>
            <person name="Howson R.W."/>
            <person name="Belle A."/>
            <person name="Dephoure N."/>
            <person name="O'Shea E.K."/>
            <person name="Weissman J.S."/>
        </authorList>
    </citation>
    <scope>LEVEL OF PROTEIN EXPRESSION [LARGE SCALE ANALYSIS]</scope>
</reference>
<reference key="5">
    <citation type="journal article" date="2008" name="Eukaryot. Cell">
        <title>Rtr1 is the Saccharomyces cerevisiae homolog of a novel family of RNA polymerase II-binding proteins.</title>
        <authorList>
            <person name="Gibney P.A."/>
            <person name="Fries T."/>
            <person name="Bailer S.M."/>
            <person name="Morano K.A."/>
        </authorList>
    </citation>
    <scope>FUNCTION</scope>
    <scope>SUBCELLULAR LOCATION</scope>
    <scope>ZINC-FINGER</scope>
    <scope>MUTAGENESIS OF CYS-73; CYS-112 AND HIS-116</scope>
    <scope>INTERACTION WITH RPO21</scope>
</reference>
<reference key="6">
    <citation type="journal article" date="2009" name="Mol. Cell">
        <title>Rtr1 is a CTD phosphatase that regulates RNA polymerase II during the transition from serine 5 to serine 2 phosphorylation.</title>
        <authorList>
            <person name="Mosley A.L."/>
            <person name="Pattenden S.G."/>
            <person name="Carey M."/>
            <person name="Venkatesh S."/>
            <person name="Gilmore J.M."/>
            <person name="Florens L."/>
            <person name="Workman J.L."/>
            <person name="Washburn M.P."/>
        </authorList>
    </citation>
    <scope>FUNCTION</scope>
    <scope>SUBCELLULAR LOCATION</scope>
</reference>
<gene>
    <name type="primary">RTR1</name>
    <name type="ordered locus">YER139C</name>
</gene>
<organism>
    <name type="scientific">Saccharomyces cerevisiae (strain ATCC 204508 / S288c)</name>
    <name type="common">Baker's yeast</name>
    <dbReference type="NCBI Taxonomy" id="559292"/>
    <lineage>
        <taxon>Eukaryota</taxon>
        <taxon>Fungi</taxon>
        <taxon>Dikarya</taxon>
        <taxon>Ascomycota</taxon>
        <taxon>Saccharomycotina</taxon>
        <taxon>Saccharomycetes</taxon>
        <taxon>Saccharomycetales</taxon>
        <taxon>Saccharomycetaceae</taxon>
        <taxon>Saccharomyces</taxon>
    </lineage>
</organism>
<keyword id="KW-0002">3D-structure</keyword>
<keyword id="KW-0963">Cytoplasm</keyword>
<keyword id="KW-0378">Hydrolase</keyword>
<keyword id="KW-0479">Metal-binding</keyword>
<keyword id="KW-0539">Nucleus</keyword>
<keyword id="KW-0904">Protein phosphatase</keyword>
<keyword id="KW-1185">Reference proteome</keyword>
<keyword id="KW-0804">Transcription</keyword>
<keyword id="KW-0805">Transcription regulation</keyword>
<keyword id="KW-0862">Zinc</keyword>
<keyword id="KW-0863">Zinc-finger</keyword>
<proteinExistence type="evidence at protein level"/>
<name>RTR1_YEAST</name>